<proteinExistence type="inferred from homology"/>
<dbReference type="EC" id="6.3.4.2" evidence="1"/>
<dbReference type="EMBL" id="BX571856">
    <property type="protein sequence ID" value="CAG41196.1"/>
    <property type="molecule type" value="Genomic_DNA"/>
</dbReference>
<dbReference type="RefSeq" id="WP_000159960.1">
    <property type="nucleotide sequence ID" value="NC_002952.2"/>
</dbReference>
<dbReference type="SMR" id="Q6GEU8"/>
<dbReference type="KEGG" id="sar:SAR2215"/>
<dbReference type="HOGENOM" id="CLU_011675_5_0_9"/>
<dbReference type="UniPathway" id="UPA00159">
    <property type="reaction ID" value="UER00277"/>
</dbReference>
<dbReference type="Proteomes" id="UP000000596">
    <property type="component" value="Chromosome"/>
</dbReference>
<dbReference type="GO" id="GO:0005829">
    <property type="term" value="C:cytosol"/>
    <property type="evidence" value="ECO:0007669"/>
    <property type="project" value="TreeGrafter"/>
</dbReference>
<dbReference type="GO" id="GO:0005524">
    <property type="term" value="F:ATP binding"/>
    <property type="evidence" value="ECO:0007669"/>
    <property type="project" value="UniProtKB-KW"/>
</dbReference>
<dbReference type="GO" id="GO:0003883">
    <property type="term" value="F:CTP synthase activity"/>
    <property type="evidence" value="ECO:0007669"/>
    <property type="project" value="UniProtKB-UniRule"/>
</dbReference>
<dbReference type="GO" id="GO:0004359">
    <property type="term" value="F:glutaminase activity"/>
    <property type="evidence" value="ECO:0007669"/>
    <property type="project" value="RHEA"/>
</dbReference>
<dbReference type="GO" id="GO:0042802">
    <property type="term" value="F:identical protein binding"/>
    <property type="evidence" value="ECO:0007669"/>
    <property type="project" value="TreeGrafter"/>
</dbReference>
<dbReference type="GO" id="GO:0046872">
    <property type="term" value="F:metal ion binding"/>
    <property type="evidence" value="ECO:0007669"/>
    <property type="project" value="UniProtKB-KW"/>
</dbReference>
<dbReference type="GO" id="GO:0044210">
    <property type="term" value="P:'de novo' CTP biosynthetic process"/>
    <property type="evidence" value="ECO:0007669"/>
    <property type="project" value="UniProtKB-UniRule"/>
</dbReference>
<dbReference type="GO" id="GO:0019856">
    <property type="term" value="P:pyrimidine nucleobase biosynthetic process"/>
    <property type="evidence" value="ECO:0007669"/>
    <property type="project" value="TreeGrafter"/>
</dbReference>
<dbReference type="CDD" id="cd03113">
    <property type="entry name" value="CTPS_N"/>
    <property type="match status" value="1"/>
</dbReference>
<dbReference type="CDD" id="cd01746">
    <property type="entry name" value="GATase1_CTP_Synthase"/>
    <property type="match status" value="1"/>
</dbReference>
<dbReference type="FunFam" id="3.40.50.300:FF:000009">
    <property type="entry name" value="CTP synthase"/>
    <property type="match status" value="1"/>
</dbReference>
<dbReference type="FunFam" id="3.40.50.880:FF:000002">
    <property type="entry name" value="CTP synthase"/>
    <property type="match status" value="1"/>
</dbReference>
<dbReference type="Gene3D" id="3.40.50.880">
    <property type="match status" value="1"/>
</dbReference>
<dbReference type="Gene3D" id="3.40.50.300">
    <property type="entry name" value="P-loop containing nucleotide triphosphate hydrolases"/>
    <property type="match status" value="1"/>
</dbReference>
<dbReference type="HAMAP" id="MF_01227">
    <property type="entry name" value="PyrG"/>
    <property type="match status" value="1"/>
</dbReference>
<dbReference type="InterPro" id="IPR029062">
    <property type="entry name" value="Class_I_gatase-like"/>
</dbReference>
<dbReference type="InterPro" id="IPR004468">
    <property type="entry name" value="CTP_synthase"/>
</dbReference>
<dbReference type="InterPro" id="IPR017456">
    <property type="entry name" value="CTP_synthase_N"/>
</dbReference>
<dbReference type="InterPro" id="IPR017926">
    <property type="entry name" value="GATASE"/>
</dbReference>
<dbReference type="InterPro" id="IPR033828">
    <property type="entry name" value="GATase1_CTP_Synthase"/>
</dbReference>
<dbReference type="InterPro" id="IPR027417">
    <property type="entry name" value="P-loop_NTPase"/>
</dbReference>
<dbReference type="NCBIfam" id="NF003792">
    <property type="entry name" value="PRK05380.1"/>
    <property type="match status" value="1"/>
</dbReference>
<dbReference type="NCBIfam" id="TIGR00337">
    <property type="entry name" value="PyrG"/>
    <property type="match status" value="1"/>
</dbReference>
<dbReference type="PANTHER" id="PTHR11550">
    <property type="entry name" value="CTP SYNTHASE"/>
    <property type="match status" value="1"/>
</dbReference>
<dbReference type="PANTHER" id="PTHR11550:SF0">
    <property type="entry name" value="CTP SYNTHASE-RELATED"/>
    <property type="match status" value="1"/>
</dbReference>
<dbReference type="Pfam" id="PF06418">
    <property type="entry name" value="CTP_synth_N"/>
    <property type="match status" value="1"/>
</dbReference>
<dbReference type="Pfam" id="PF00117">
    <property type="entry name" value="GATase"/>
    <property type="match status" value="1"/>
</dbReference>
<dbReference type="SUPFAM" id="SSF52317">
    <property type="entry name" value="Class I glutamine amidotransferase-like"/>
    <property type="match status" value="1"/>
</dbReference>
<dbReference type="SUPFAM" id="SSF52540">
    <property type="entry name" value="P-loop containing nucleoside triphosphate hydrolases"/>
    <property type="match status" value="1"/>
</dbReference>
<dbReference type="PROSITE" id="PS51273">
    <property type="entry name" value="GATASE_TYPE_1"/>
    <property type="match status" value="1"/>
</dbReference>
<reference key="1">
    <citation type="journal article" date="2004" name="Proc. Natl. Acad. Sci. U.S.A.">
        <title>Complete genomes of two clinical Staphylococcus aureus strains: evidence for the rapid evolution of virulence and drug resistance.</title>
        <authorList>
            <person name="Holden M.T.G."/>
            <person name="Feil E.J."/>
            <person name="Lindsay J.A."/>
            <person name="Peacock S.J."/>
            <person name="Day N.P.J."/>
            <person name="Enright M.C."/>
            <person name="Foster T.J."/>
            <person name="Moore C.E."/>
            <person name="Hurst L."/>
            <person name="Atkin R."/>
            <person name="Barron A."/>
            <person name="Bason N."/>
            <person name="Bentley S.D."/>
            <person name="Chillingworth C."/>
            <person name="Chillingworth T."/>
            <person name="Churcher C."/>
            <person name="Clark L."/>
            <person name="Corton C."/>
            <person name="Cronin A."/>
            <person name="Doggett J."/>
            <person name="Dowd L."/>
            <person name="Feltwell T."/>
            <person name="Hance Z."/>
            <person name="Harris B."/>
            <person name="Hauser H."/>
            <person name="Holroyd S."/>
            <person name="Jagels K."/>
            <person name="James K.D."/>
            <person name="Lennard N."/>
            <person name="Line A."/>
            <person name="Mayes R."/>
            <person name="Moule S."/>
            <person name="Mungall K."/>
            <person name="Ormond D."/>
            <person name="Quail M.A."/>
            <person name="Rabbinowitsch E."/>
            <person name="Rutherford K.M."/>
            <person name="Sanders M."/>
            <person name="Sharp S."/>
            <person name="Simmonds M."/>
            <person name="Stevens K."/>
            <person name="Whitehead S."/>
            <person name="Barrell B.G."/>
            <person name="Spratt B.G."/>
            <person name="Parkhill J."/>
        </authorList>
    </citation>
    <scope>NUCLEOTIDE SEQUENCE [LARGE SCALE GENOMIC DNA]</scope>
    <source>
        <strain>MRSA252</strain>
    </source>
</reference>
<name>PYRG_STAAR</name>
<accession>Q6GEU8</accession>
<protein>
    <recommendedName>
        <fullName evidence="1">CTP synthase</fullName>
        <ecNumber evidence="1">6.3.4.2</ecNumber>
    </recommendedName>
    <alternativeName>
        <fullName evidence="1">Cytidine 5'-triphosphate synthase</fullName>
    </alternativeName>
    <alternativeName>
        <fullName evidence="1">Cytidine triphosphate synthetase</fullName>
        <shortName evidence="1">CTP synthetase</shortName>
        <shortName evidence="1">CTPS</shortName>
    </alternativeName>
    <alternativeName>
        <fullName evidence="1">UTP--ammonia ligase</fullName>
    </alternativeName>
</protein>
<gene>
    <name evidence="1" type="primary">pyrG</name>
    <name type="ordered locus">SAR2215</name>
</gene>
<comment type="function">
    <text evidence="1">Catalyzes the ATP-dependent amination of UTP to CTP with either L-glutamine or ammonia as the source of nitrogen. Regulates intracellular CTP levels through interactions with the four ribonucleotide triphosphates.</text>
</comment>
<comment type="catalytic activity">
    <reaction evidence="1">
        <text>UTP + L-glutamine + ATP + H2O = CTP + L-glutamate + ADP + phosphate + 2 H(+)</text>
        <dbReference type="Rhea" id="RHEA:26426"/>
        <dbReference type="ChEBI" id="CHEBI:15377"/>
        <dbReference type="ChEBI" id="CHEBI:15378"/>
        <dbReference type="ChEBI" id="CHEBI:29985"/>
        <dbReference type="ChEBI" id="CHEBI:30616"/>
        <dbReference type="ChEBI" id="CHEBI:37563"/>
        <dbReference type="ChEBI" id="CHEBI:43474"/>
        <dbReference type="ChEBI" id="CHEBI:46398"/>
        <dbReference type="ChEBI" id="CHEBI:58359"/>
        <dbReference type="ChEBI" id="CHEBI:456216"/>
        <dbReference type="EC" id="6.3.4.2"/>
    </reaction>
</comment>
<comment type="catalytic activity">
    <reaction evidence="1">
        <text>L-glutamine + H2O = L-glutamate + NH4(+)</text>
        <dbReference type="Rhea" id="RHEA:15889"/>
        <dbReference type="ChEBI" id="CHEBI:15377"/>
        <dbReference type="ChEBI" id="CHEBI:28938"/>
        <dbReference type="ChEBI" id="CHEBI:29985"/>
        <dbReference type="ChEBI" id="CHEBI:58359"/>
    </reaction>
</comment>
<comment type="catalytic activity">
    <reaction evidence="1">
        <text>UTP + NH4(+) + ATP = CTP + ADP + phosphate + 2 H(+)</text>
        <dbReference type="Rhea" id="RHEA:16597"/>
        <dbReference type="ChEBI" id="CHEBI:15378"/>
        <dbReference type="ChEBI" id="CHEBI:28938"/>
        <dbReference type="ChEBI" id="CHEBI:30616"/>
        <dbReference type="ChEBI" id="CHEBI:37563"/>
        <dbReference type="ChEBI" id="CHEBI:43474"/>
        <dbReference type="ChEBI" id="CHEBI:46398"/>
        <dbReference type="ChEBI" id="CHEBI:456216"/>
    </reaction>
</comment>
<comment type="activity regulation">
    <text evidence="1">Allosterically activated by GTP, when glutamine is the substrate; GTP has no effect on the reaction when ammonia is the substrate. The allosteric effector GTP functions by stabilizing the protein conformation that binds the tetrahedral intermediate(s) formed during glutamine hydrolysis. Inhibited by the product CTP, via allosteric rather than competitive inhibition.</text>
</comment>
<comment type="pathway">
    <text evidence="1">Pyrimidine metabolism; CTP biosynthesis via de novo pathway; CTP from UDP: step 2/2.</text>
</comment>
<comment type="subunit">
    <text evidence="1">Homotetramer.</text>
</comment>
<comment type="miscellaneous">
    <text evidence="1">CTPSs have evolved a hybrid strategy for distinguishing between UTP and CTP. The overlapping regions of the product feedback inhibitory and substrate sites recognize a common feature in both compounds, the triphosphate moiety. To differentiate isosteric substrate and product pyrimidine rings, an additional pocket far from the expected kinase/ligase catalytic site, specifically recognizes the cytosine and ribose portions of the product inhibitor.</text>
</comment>
<comment type="similarity">
    <text evidence="1">Belongs to the CTP synthase family.</text>
</comment>
<feature type="chain" id="PRO_0000138225" description="CTP synthase">
    <location>
        <begin position="1"/>
        <end position="536"/>
    </location>
</feature>
<feature type="domain" description="Glutamine amidotransferase type-1" evidence="1">
    <location>
        <begin position="293"/>
        <end position="535"/>
    </location>
</feature>
<feature type="region of interest" description="Amidoligase domain" evidence="1">
    <location>
        <begin position="1"/>
        <end position="267"/>
    </location>
</feature>
<feature type="active site" description="Nucleophile; for glutamine hydrolysis" evidence="1">
    <location>
        <position position="382"/>
    </location>
</feature>
<feature type="active site" evidence="1">
    <location>
        <position position="508"/>
    </location>
</feature>
<feature type="active site" evidence="1">
    <location>
        <position position="510"/>
    </location>
</feature>
<feature type="binding site" evidence="1">
    <location>
        <position position="13"/>
    </location>
    <ligand>
        <name>CTP</name>
        <dbReference type="ChEBI" id="CHEBI:37563"/>
        <note>allosteric inhibitor</note>
    </ligand>
</feature>
<feature type="binding site" evidence="1">
    <location>
        <position position="13"/>
    </location>
    <ligand>
        <name>UTP</name>
        <dbReference type="ChEBI" id="CHEBI:46398"/>
    </ligand>
</feature>
<feature type="binding site" evidence="1">
    <location>
        <begin position="14"/>
        <end position="19"/>
    </location>
    <ligand>
        <name>ATP</name>
        <dbReference type="ChEBI" id="CHEBI:30616"/>
    </ligand>
</feature>
<feature type="binding site" evidence="1">
    <location>
        <position position="54"/>
    </location>
    <ligand>
        <name>L-glutamine</name>
        <dbReference type="ChEBI" id="CHEBI:58359"/>
    </ligand>
</feature>
<feature type="binding site" evidence="1">
    <location>
        <position position="71"/>
    </location>
    <ligand>
        <name>ATP</name>
        <dbReference type="ChEBI" id="CHEBI:30616"/>
    </ligand>
</feature>
<feature type="binding site" evidence="1">
    <location>
        <position position="71"/>
    </location>
    <ligand>
        <name>Mg(2+)</name>
        <dbReference type="ChEBI" id="CHEBI:18420"/>
    </ligand>
</feature>
<feature type="binding site" evidence="1">
    <location>
        <position position="141"/>
    </location>
    <ligand>
        <name>Mg(2+)</name>
        <dbReference type="ChEBI" id="CHEBI:18420"/>
    </ligand>
</feature>
<feature type="binding site" evidence="1">
    <location>
        <begin position="148"/>
        <end position="150"/>
    </location>
    <ligand>
        <name>CTP</name>
        <dbReference type="ChEBI" id="CHEBI:37563"/>
        <note>allosteric inhibitor</note>
    </ligand>
</feature>
<feature type="binding site" evidence="1">
    <location>
        <begin position="188"/>
        <end position="193"/>
    </location>
    <ligand>
        <name>CTP</name>
        <dbReference type="ChEBI" id="CHEBI:37563"/>
        <note>allosteric inhibitor</note>
    </ligand>
</feature>
<feature type="binding site" evidence="1">
    <location>
        <begin position="188"/>
        <end position="193"/>
    </location>
    <ligand>
        <name>UTP</name>
        <dbReference type="ChEBI" id="CHEBI:46398"/>
    </ligand>
</feature>
<feature type="binding site" evidence="1">
    <location>
        <position position="224"/>
    </location>
    <ligand>
        <name>CTP</name>
        <dbReference type="ChEBI" id="CHEBI:37563"/>
        <note>allosteric inhibitor</note>
    </ligand>
</feature>
<feature type="binding site" evidence="1">
    <location>
        <position position="224"/>
    </location>
    <ligand>
        <name>UTP</name>
        <dbReference type="ChEBI" id="CHEBI:46398"/>
    </ligand>
</feature>
<feature type="binding site" evidence="1">
    <location>
        <begin position="240"/>
        <end position="242"/>
    </location>
    <ligand>
        <name>ATP</name>
        <dbReference type="ChEBI" id="CHEBI:30616"/>
    </ligand>
</feature>
<feature type="binding site" evidence="1">
    <location>
        <position position="355"/>
    </location>
    <ligand>
        <name>L-glutamine</name>
        <dbReference type="ChEBI" id="CHEBI:58359"/>
    </ligand>
</feature>
<feature type="binding site" evidence="1">
    <location>
        <begin position="383"/>
        <end position="386"/>
    </location>
    <ligand>
        <name>L-glutamine</name>
        <dbReference type="ChEBI" id="CHEBI:58359"/>
    </ligand>
</feature>
<feature type="binding site" evidence="1">
    <location>
        <position position="406"/>
    </location>
    <ligand>
        <name>L-glutamine</name>
        <dbReference type="ChEBI" id="CHEBI:58359"/>
    </ligand>
</feature>
<feature type="binding site" evidence="1">
    <location>
        <position position="463"/>
    </location>
    <ligand>
        <name>L-glutamine</name>
        <dbReference type="ChEBI" id="CHEBI:58359"/>
    </ligand>
</feature>
<organism>
    <name type="scientific">Staphylococcus aureus (strain MRSA252)</name>
    <dbReference type="NCBI Taxonomy" id="282458"/>
    <lineage>
        <taxon>Bacteria</taxon>
        <taxon>Bacillati</taxon>
        <taxon>Bacillota</taxon>
        <taxon>Bacilli</taxon>
        <taxon>Bacillales</taxon>
        <taxon>Staphylococcaceae</taxon>
        <taxon>Staphylococcus</taxon>
    </lineage>
</organism>
<keyword id="KW-0067">ATP-binding</keyword>
<keyword id="KW-0315">Glutamine amidotransferase</keyword>
<keyword id="KW-0436">Ligase</keyword>
<keyword id="KW-0460">Magnesium</keyword>
<keyword id="KW-0479">Metal-binding</keyword>
<keyword id="KW-0547">Nucleotide-binding</keyword>
<keyword id="KW-0665">Pyrimidine biosynthesis</keyword>
<sequence>MTKFIFVTGGVVSSLGKGITASSLGRLLKDRGLNVTIQKFDPYLNVDPGTMSPYQHGEVFVTDDGAETDLDLGHYERFIDINLNKFSNVTAGKVYSHVLKKERRGDYLGGTVQVIPHITNEIKERLLLAGESTNADVVITEIGGTTGDIESLPFIEAIRQIRSDLGRENVMYVHCTLLPYIKAAGEMKTKPTQHSVKELRGLGIQPDLIVVRTEYEMTQDLKDKIALFCDINKESVIECRDADSLYEIPLQLSQQNMDDIVIKRLQLNAKYETQLDEWKQLLDIVNNLDGKITIGLVGKYVSLQDAYLSVVESLKHAGYPFAKDIDIRWIDSSEVTDENAAEYLADVDGILVPGGFGFRASEGKISAIKYARENNVPFFGICLGMQLATVEFSRNVLGLEGAHSAELDPATPYPIIDLLPEQKDIEDLGGTLRLGLYPCSIKEGTLAQDVYGKAEIEERHRHRYEFNNDYREQLEANGMVISGTSPDGRLVEMVEIPTNDFFIACQFHPEFLSRPNRPHPIFKSFIEASLKYQQNK</sequence>
<evidence type="ECO:0000255" key="1">
    <source>
        <dbReference type="HAMAP-Rule" id="MF_01227"/>
    </source>
</evidence>